<feature type="chain" id="PRO_0000111351" description="Small ribosomal subunit protein uS9">
    <location>
        <begin position="1"/>
        <end position="182"/>
    </location>
</feature>
<gene>
    <name evidence="1" type="primary">rpsI</name>
    <name type="ordered locus">Cgl0582</name>
    <name type="ordered locus">cg0674</name>
</gene>
<organism>
    <name type="scientific">Corynebacterium glutamicum (strain ATCC 13032 / DSM 20300 / JCM 1318 / BCRC 11384 / CCUG 27702 / LMG 3730 / NBRC 12168 / NCIMB 10025 / NRRL B-2784 / 534)</name>
    <dbReference type="NCBI Taxonomy" id="196627"/>
    <lineage>
        <taxon>Bacteria</taxon>
        <taxon>Bacillati</taxon>
        <taxon>Actinomycetota</taxon>
        <taxon>Actinomycetes</taxon>
        <taxon>Mycobacteriales</taxon>
        <taxon>Corynebacteriaceae</taxon>
        <taxon>Corynebacterium</taxon>
    </lineage>
</organism>
<comment type="similarity">
    <text evidence="1">Belongs to the universal ribosomal protein uS9 family.</text>
</comment>
<keyword id="KW-1185">Reference proteome</keyword>
<keyword id="KW-0687">Ribonucleoprotein</keyword>
<keyword id="KW-0689">Ribosomal protein</keyword>
<dbReference type="EMBL" id="BA000036">
    <property type="protein sequence ID" value="BAB97975.1"/>
    <property type="molecule type" value="Genomic_DNA"/>
</dbReference>
<dbReference type="EMBL" id="BX927149">
    <property type="protein sequence ID" value="CAF19287.1"/>
    <property type="molecule type" value="Genomic_DNA"/>
</dbReference>
<dbReference type="RefSeq" id="NP_599818.1">
    <property type="nucleotide sequence ID" value="NC_003450.3"/>
</dbReference>
<dbReference type="RefSeq" id="WP_003854537.1">
    <property type="nucleotide sequence ID" value="NC_006958.1"/>
</dbReference>
<dbReference type="SMR" id="Q8NST5"/>
<dbReference type="STRING" id="196627.cg0674"/>
<dbReference type="GeneID" id="1018586"/>
<dbReference type="KEGG" id="cgb:cg0674"/>
<dbReference type="KEGG" id="cgl:Cgl0582"/>
<dbReference type="PATRIC" id="fig|196627.13.peg.573"/>
<dbReference type="eggNOG" id="COG0103">
    <property type="taxonomic scope" value="Bacteria"/>
</dbReference>
<dbReference type="HOGENOM" id="CLU_046483_2_0_11"/>
<dbReference type="OrthoDB" id="9803965at2"/>
<dbReference type="BioCyc" id="CORYNE:G18NG-10144-MONOMER"/>
<dbReference type="Proteomes" id="UP000000582">
    <property type="component" value="Chromosome"/>
</dbReference>
<dbReference type="Proteomes" id="UP000001009">
    <property type="component" value="Chromosome"/>
</dbReference>
<dbReference type="GO" id="GO:0005737">
    <property type="term" value="C:cytoplasm"/>
    <property type="evidence" value="ECO:0007669"/>
    <property type="project" value="UniProtKB-ARBA"/>
</dbReference>
<dbReference type="GO" id="GO:0015935">
    <property type="term" value="C:small ribosomal subunit"/>
    <property type="evidence" value="ECO:0007669"/>
    <property type="project" value="TreeGrafter"/>
</dbReference>
<dbReference type="GO" id="GO:0003723">
    <property type="term" value="F:RNA binding"/>
    <property type="evidence" value="ECO:0007669"/>
    <property type="project" value="TreeGrafter"/>
</dbReference>
<dbReference type="GO" id="GO:0003735">
    <property type="term" value="F:structural constituent of ribosome"/>
    <property type="evidence" value="ECO:0007669"/>
    <property type="project" value="InterPro"/>
</dbReference>
<dbReference type="GO" id="GO:0006412">
    <property type="term" value="P:translation"/>
    <property type="evidence" value="ECO:0007669"/>
    <property type="project" value="UniProtKB-UniRule"/>
</dbReference>
<dbReference type="FunFam" id="3.30.230.10:FF:000001">
    <property type="entry name" value="30S ribosomal protein S9"/>
    <property type="match status" value="1"/>
</dbReference>
<dbReference type="Gene3D" id="3.30.230.10">
    <property type="match status" value="1"/>
</dbReference>
<dbReference type="HAMAP" id="MF_00532_B">
    <property type="entry name" value="Ribosomal_uS9_B"/>
    <property type="match status" value="1"/>
</dbReference>
<dbReference type="InterPro" id="IPR020568">
    <property type="entry name" value="Ribosomal_Su5_D2-typ_SF"/>
</dbReference>
<dbReference type="InterPro" id="IPR000754">
    <property type="entry name" value="Ribosomal_uS9"/>
</dbReference>
<dbReference type="InterPro" id="IPR023035">
    <property type="entry name" value="Ribosomal_uS9_bac/plastid"/>
</dbReference>
<dbReference type="InterPro" id="IPR020574">
    <property type="entry name" value="Ribosomal_uS9_CS"/>
</dbReference>
<dbReference type="InterPro" id="IPR014721">
    <property type="entry name" value="Ribsml_uS5_D2-typ_fold_subgr"/>
</dbReference>
<dbReference type="NCBIfam" id="NF001099">
    <property type="entry name" value="PRK00132.1"/>
    <property type="match status" value="1"/>
</dbReference>
<dbReference type="PANTHER" id="PTHR21569">
    <property type="entry name" value="RIBOSOMAL PROTEIN S9"/>
    <property type="match status" value="1"/>
</dbReference>
<dbReference type="PANTHER" id="PTHR21569:SF1">
    <property type="entry name" value="SMALL RIBOSOMAL SUBUNIT PROTEIN US9M"/>
    <property type="match status" value="1"/>
</dbReference>
<dbReference type="Pfam" id="PF00380">
    <property type="entry name" value="Ribosomal_S9"/>
    <property type="match status" value="1"/>
</dbReference>
<dbReference type="SUPFAM" id="SSF54211">
    <property type="entry name" value="Ribosomal protein S5 domain 2-like"/>
    <property type="match status" value="1"/>
</dbReference>
<dbReference type="PROSITE" id="PS00360">
    <property type="entry name" value="RIBOSOMAL_S9"/>
    <property type="match status" value="1"/>
</dbReference>
<sequence>MSEPIQNENVESNVADAADIAAATAATEEFTNTIGDAIATASEEETIEAAPVVLDGPIQTVGRRKRAIVRVRLVAGSGEFKCNGRTLEEYFPNKLHQQLIKAPLVLLDRENQFDIVATLKGGGPTGQAGAFRLAIARALNAYNPAERGELKKAGFLTRDARAVERKKAGLHKARRAPQYSKR</sequence>
<proteinExistence type="inferred from homology"/>
<accession>Q8NST5</accession>
<evidence type="ECO:0000255" key="1">
    <source>
        <dbReference type="HAMAP-Rule" id="MF_00532"/>
    </source>
</evidence>
<evidence type="ECO:0000305" key="2"/>
<protein>
    <recommendedName>
        <fullName evidence="1">Small ribosomal subunit protein uS9</fullName>
    </recommendedName>
    <alternativeName>
        <fullName evidence="2">30S ribosomal protein S9</fullName>
    </alternativeName>
</protein>
<reference key="1">
    <citation type="journal article" date="2003" name="Appl. Microbiol. Biotechnol.">
        <title>The Corynebacterium glutamicum genome: features and impacts on biotechnological processes.</title>
        <authorList>
            <person name="Ikeda M."/>
            <person name="Nakagawa S."/>
        </authorList>
    </citation>
    <scope>NUCLEOTIDE SEQUENCE [LARGE SCALE GENOMIC DNA]</scope>
    <source>
        <strain>ATCC 13032 / DSM 20300 / JCM 1318 / BCRC 11384 / CCUG 27702 / LMG 3730 / NBRC 12168 / NCIMB 10025 / NRRL B-2784 / 534</strain>
    </source>
</reference>
<reference key="2">
    <citation type="journal article" date="2003" name="J. Biotechnol.">
        <title>The complete Corynebacterium glutamicum ATCC 13032 genome sequence and its impact on the production of L-aspartate-derived amino acids and vitamins.</title>
        <authorList>
            <person name="Kalinowski J."/>
            <person name="Bathe B."/>
            <person name="Bartels D."/>
            <person name="Bischoff N."/>
            <person name="Bott M."/>
            <person name="Burkovski A."/>
            <person name="Dusch N."/>
            <person name="Eggeling L."/>
            <person name="Eikmanns B.J."/>
            <person name="Gaigalat L."/>
            <person name="Goesmann A."/>
            <person name="Hartmann M."/>
            <person name="Huthmacher K."/>
            <person name="Kraemer R."/>
            <person name="Linke B."/>
            <person name="McHardy A.C."/>
            <person name="Meyer F."/>
            <person name="Moeckel B."/>
            <person name="Pfefferle W."/>
            <person name="Puehler A."/>
            <person name="Rey D.A."/>
            <person name="Rueckert C."/>
            <person name="Rupp O."/>
            <person name="Sahm H."/>
            <person name="Wendisch V.F."/>
            <person name="Wiegraebe I."/>
            <person name="Tauch A."/>
        </authorList>
    </citation>
    <scope>NUCLEOTIDE SEQUENCE [LARGE SCALE GENOMIC DNA]</scope>
    <source>
        <strain>ATCC 13032 / DSM 20300 / JCM 1318 / BCRC 11384 / CCUG 27702 / LMG 3730 / NBRC 12168 / NCIMB 10025 / NRRL B-2784 / 534</strain>
    </source>
</reference>
<name>RS9_CORGL</name>